<accession>A0PKH8</accession>
<comment type="function">
    <text evidence="1">Binds to the 23S rRNA.</text>
</comment>
<comment type="similarity">
    <text evidence="1">Belongs to the bacterial ribosomal protein bL9 family.</text>
</comment>
<reference key="1">
    <citation type="journal article" date="2007" name="Genome Res.">
        <title>Reductive evolution and niche adaptation inferred from the genome of Mycobacterium ulcerans, the causative agent of Buruli ulcer.</title>
        <authorList>
            <person name="Stinear T.P."/>
            <person name="Seemann T."/>
            <person name="Pidot S."/>
            <person name="Frigui W."/>
            <person name="Reysset G."/>
            <person name="Garnier T."/>
            <person name="Meurice G."/>
            <person name="Simon D."/>
            <person name="Bouchier C."/>
            <person name="Ma L."/>
            <person name="Tichit M."/>
            <person name="Porter J.L."/>
            <person name="Ryan J."/>
            <person name="Johnson P.D.R."/>
            <person name="Davies J.K."/>
            <person name="Jenkin G.A."/>
            <person name="Small P.L.C."/>
            <person name="Jones L.M."/>
            <person name="Tekaia F."/>
            <person name="Laval F."/>
            <person name="Daffe M."/>
            <person name="Parkhill J."/>
            <person name="Cole S.T."/>
        </authorList>
    </citation>
    <scope>NUCLEOTIDE SEQUENCE [LARGE SCALE GENOMIC DNA]</scope>
    <source>
        <strain>Agy99</strain>
    </source>
</reference>
<protein>
    <recommendedName>
        <fullName evidence="1">Large ribosomal subunit protein bL9</fullName>
    </recommendedName>
    <alternativeName>
        <fullName evidence="2">50S ribosomal protein L9</fullName>
    </alternativeName>
</protein>
<proteinExistence type="inferred from homology"/>
<dbReference type="EMBL" id="CP000325">
    <property type="protein sequence ID" value="ABL02847.1"/>
    <property type="molecule type" value="Genomic_DNA"/>
</dbReference>
<dbReference type="RefSeq" id="WP_011738472.1">
    <property type="nucleotide sequence ID" value="NC_008611.1"/>
</dbReference>
<dbReference type="SMR" id="A0PKH8"/>
<dbReference type="KEGG" id="mul:MUL_0074"/>
<dbReference type="eggNOG" id="COG0359">
    <property type="taxonomic scope" value="Bacteria"/>
</dbReference>
<dbReference type="HOGENOM" id="CLU_078938_5_1_11"/>
<dbReference type="Proteomes" id="UP000000765">
    <property type="component" value="Chromosome"/>
</dbReference>
<dbReference type="GO" id="GO:1990904">
    <property type="term" value="C:ribonucleoprotein complex"/>
    <property type="evidence" value="ECO:0007669"/>
    <property type="project" value="UniProtKB-KW"/>
</dbReference>
<dbReference type="GO" id="GO:0005840">
    <property type="term" value="C:ribosome"/>
    <property type="evidence" value="ECO:0007669"/>
    <property type="project" value="UniProtKB-KW"/>
</dbReference>
<dbReference type="GO" id="GO:0019843">
    <property type="term" value="F:rRNA binding"/>
    <property type="evidence" value="ECO:0007669"/>
    <property type="project" value="UniProtKB-UniRule"/>
</dbReference>
<dbReference type="GO" id="GO:0003735">
    <property type="term" value="F:structural constituent of ribosome"/>
    <property type="evidence" value="ECO:0007669"/>
    <property type="project" value="InterPro"/>
</dbReference>
<dbReference type="GO" id="GO:0006412">
    <property type="term" value="P:translation"/>
    <property type="evidence" value="ECO:0007669"/>
    <property type="project" value="UniProtKB-UniRule"/>
</dbReference>
<dbReference type="FunFam" id="3.10.430.100:FF:000006">
    <property type="entry name" value="50S ribosomal protein L9"/>
    <property type="match status" value="1"/>
</dbReference>
<dbReference type="FunFam" id="3.40.5.10:FF:000003">
    <property type="entry name" value="50S ribosomal protein L9"/>
    <property type="match status" value="1"/>
</dbReference>
<dbReference type="Gene3D" id="3.10.430.100">
    <property type="entry name" value="Ribosomal protein L9, C-terminal domain"/>
    <property type="match status" value="1"/>
</dbReference>
<dbReference type="Gene3D" id="3.40.5.10">
    <property type="entry name" value="Ribosomal protein L9, N-terminal domain"/>
    <property type="match status" value="1"/>
</dbReference>
<dbReference type="HAMAP" id="MF_00503">
    <property type="entry name" value="Ribosomal_bL9"/>
    <property type="match status" value="1"/>
</dbReference>
<dbReference type="InterPro" id="IPR000244">
    <property type="entry name" value="Ribosomal_bL9"/>
</dbReference>
<dbReference type="InterPro" id="IPR009027">
    <property type="entry name" value="Ribosomal_bL9/RNase_H1_N"/>
</dbReference>
<dbReference type="InterPro" id="IPR020594">
    <property type="entry name" value="Ribosomal_bL9_bac/chp"/>
</dbReference>
<dbReference type="InterPro" id="IPR020069">
    <property type="entry name" value="Ribosomal_bL9_C"/>
</dbReference>
<dbReference type="InterPro" id="IPR036791">
    <property type="entry name" value="Ribosomal_bL9_C_sf"/>
</dbReference>
<dbReference type="InterPro" id="IPR020070">
    <property type="entry name" value="Ribosomal_bL9_N"/>
</dbReference>
<dbReference type="InterPro" id="IPR036935">
    <property type="entry name" value="Ribosomal_bL9_N_sf"/>
</dbReference>
<dbReference type="NCBIfam" id="TIGR00158">
    <property type="entry name" value="L9"/>
    <property type="match status" value="1"/>
</dbReference>
<dbReference type="PANTHER" id="PTHR21368">
    <property type="entry name" value="50S RIBOSOMAL PROTEIN L9"/>
    <property type="match status" value="1"/>
</dbReference>
<dbReference type="Pfam" id="PF03948">
    <property type="entry name" value="Ribosomal_L9_C"/>
    <property type="match status" value="1"/>
</dbReference>
<dbReference type="Pfam" id="PF01281">
    <property type="entry name" value="Ribosomal_L9_N"/>
    <property type="match status" value="1"/>
</dbReference>
<dbReference type="SUPFAM" id="SSF55658">
    <property type="entry name" value="L9 N-domain-like"/>
    <property type="match status" value="1"/>
</dbReference>
<dbReference type="SUPFAM" id="SSF55653">
    <property type="entry name" value="Ribosomal protein L9 C-domain"/>
    <property type="match status" value="1"/>
</dbReference>
<dbReference type="PROSITE" id="PS00651">
    <property type="entry name" value="RIBOSOMAL_L9"/>
    <property type="match status" value="1"/>
</dbReference>
<name>RL9_MYCUA</name>
<gene>
    <name evidence="1" type="primary">rplI</name>
    <name type="ordered locus">MUL_0074</name>
</gene>
<sequence>MKLILTADVDHLGSVGDTVEVKDGYGRNFLLPRGMAIVASRGAQKQADEIRRSRETKAVRDREHANEIKTAIQALGSVALPVKTAADSGKLFGSVTAGDVVAAIKKAGGPNLDKRIVRLAKAHIKAVGTHPVVMHLHPEIEVELSVDVVAES</sequence>
<keyword id="KW-0687">Ribonucleoprotein</keyword>
<keyword id="KW-0689">Ribosomal protein</keyword>
<keyword id="KW-0694">RNA-binding</keyword>
<keyword id="KW-0699">rRNA-binding</keyword>
<organism>
    <name type="scientific">Mycobacterium ulcerans (strain Agy99)</name>
    <dbReference type="NCBI Taxonomy" id="362242"/>
    <lineage>
        <taxon>Bacteria</taxon>
        <taxon>Bacillati</taxon>
        <taxon>Actinomycetota</taxon>
        <taxon>Actinomycetes</taxon>
        <taxon>Mycobacteriales</taxon>
        <taxon>Mycobacteriaceae</taxon>
        <taxon>Mycobacterium</taxon>
        <taxon>Mycobacterium ulcerans group</taxon>
    </lineage>
</organism>
<evidence type="ECO:0000255" key="1">
    <source>
        <dbReference type="HAMAP-Rule" id="MF_00503"/>
    </source>
</evidence>
<evidence type="ECO:0000305" key="2"/>
<feature type="chain" id="PRO_1000014816" description="Large ribosomal subunit protein bL9">
    <location>
        <begin position="1"/>
        <end position="152"/>
    </location>
</feature>